<dbReference type="EMBL" id="BC079938">
    <property type="protein sequence ID" value="AAH79938.1"/>
    <property type="molecule type" value="mRNA"/>
</dbReference>
<dbReference type="RefSeq" id="NP_001007502.1">
    <property type="nucleotide sequence ID" value="NM_001007501.1"/>
</dbReference>
<dbReference type="SMR" id="Q68FA4"/>
<dbReference type="FunCoup" id="Q68FA4">
    <property type="interactions" value="162"/>
</dbReference>
<dbReference type="STRING" id="8364.ENSXETP00000015467"/>
<dbReference type="PaxDb" id="8364-ENSXETP00000016558"/>
<dbReference type="DNASU" id="493228"/>
<dbReference type="GeneID" id="493228"/>
<dbReference type="KEGG" id="xtr:493228"/>
<dbReference type="AGR" id="Xenbase:XB-GENE-484815"/>
<dbReference type="CTD" id="6658"/>
<dbReference type="Xenbase" id="XB-GENE-484815">
    <property type="gene designation" value="sox3"/>
</dbReference>
<dbReference type="eggNOG" id="KOG0527">
    <property type="taxonomic scope" value="Eukaryota"/>
</dbReference>
<dbReference type="HOGENOM" id="CLU_021123_0_0_1"/>
<dbReference type="InParanoid" id="Q68FA4"/>
<dbReference type="OMA" id="GWSNGAY"/>
<dbReference type="OrthoDB" id="6247875at2759"/>
<dbReference type="PhylomeDB" id="Q68FA4"/>
<dbReference type="TreeFam" id="TF351735"/>
<dbReference type="Reactome" id="R-XTR-3769402">
    <property type="pathway name" value="Deactivation of the beta-catenin transactivating complex"/>
</dbReference>
<dbReference type="Proteomes" id="UP000008143">
    <property type="component" value="Chromosome 8"/>
</dbReference>
<dbReference type="Bgee" id="ENSXETG00000007607">
    <property type="expression patterns" value="Expressed in 2-cell stage embryo and 36 other cell types or tissues"/>
</dbReference>
<dbReference type="GO" id="GO:0005737">
    <property type="term" value="C:cytoplasm"/>
    <property type="evidence" value="ECO:0000250"/>
    <property type="project" value="UniProtKB"/>
</dbReference>
<dbReference type="GO" id="GO:0005634">
    <property type="term" value="C:nucleus"/>
    <property type="evidence" value="ECO:0000250"/>
    <property type="project" value="UniProtKB"/>
</dbReference>
<dbReference type="GO" id="GO:0008013">
    <property type="term" value="F:beta-catenin binding"/>
    <property type="evidence" value="ECO:0000250"/>
    <property type="project" value="UniProtKB"/>
</dbReference>
<dbReference type="GO" id="GO:0043565">
    <property type="term" value="F:sequence-specific DNA binding"/>
    <property type="evidence" value="ECO:0000250"/>
    <property type="project" value="UniProtKB"/>
</dbReference>
<dbReference type="GO" id="GO:0001704">
    <property type="term" value="P:formation of primary germ layer"/>
    <property type="evidence" value="ECO:0000250"/>
    <property type="project" value="UniProtKB"/>
</dbReference>
<dbReference type="GO" id="GO:0045892">
    <property type="term" value="P:negative regulation of DNA-templated transcription"/>
    <property type="evidence" value="ECO:0000250"/>
    <property type="project" value="UniProtKB"/>
</dbReference>
<dbReference type="GO" id="GO:0000122">
    <property type="term" value="P:negative regulation of transcription by RNA polymerase II"/>
    <property type="evidence" value="ECO:0000250"/>
    <property type="project" value="UniProtKB"/>
</dbReference>
<dbReference type="CDD" id="cd01388">
    <property type="entry name" value="HMG-box_SoxB"/>
    <property type="match status" value="1"/>
</dbReference>
<dbReference type="FunFam" id="1.10.30.10:FF:000002">
    <property type="entry name" value="transcription factor Sox-2"/>
    <property type="match status" value="1"/>
</dbReference>
<dbReference type="Gene3D" id="1.10.30.10">
    <property type="entry name" value="High mobility group box domain"/>
    <property type="match status" value="1"/>
</dbReference>
<dbReference type="InterPro" id="IPR009071">
    <property type="entry name" value="HMG_box_dom"/>
</dbReference>
<dbReference type="InterPro" id="IPR036910">
    <property type="entry name" value="HMG_box_dom_sf"/>
</dbReference>
<dbReference type="InterPro" id="IPR022097">
    <property type="entry name" value="SOX_fam"/>
</dbReference>
<dbReference type="InterPro" id="IPR050140">
    <property type="entry name" value="SRY-related_HMG-box_TF-like"/>
</dbReference>
<dbReference type="PANTHER" id="PTHR10270">
    <property type="entry name" value="SOX TRANSCRIPTION FACTOR"/>
    <property type="match status" value="1"/>
</dbReference>
<dbReference type="PANTHER" id="PTHR10270:SF329">
    <property type="entry name" value="TRANSCRIPTION FACTOR SOX-3"/>
    <property type="match status" value="1"/>
</dbReference>
<dbReference type="Pfam" id="PF00505">
    <property type="entry name" value="HMG_box"/>
    <property type="match status" value="1"/>
</dbReference>
<dbReference type="Pfam" id="PF12336">
    <property type="entry name" value="SOXp"/>
    <property type="match status" value="1"/>
</dbReference>
<dbReference type="SMART" id="SM00398">
    <property type="entry name" value="HMG"/>
    <property type="match status" value="1"/>
</dbReference>
<dbReference type="SUPFAM" id="SSF47095">
    <property type="entry name" value="HMG-box"/>
    <property type="match status" value="1"/>
</dbReference>
<dbReference type="PROSITE" id="PS50118">
    <property type="entry name" value="HMG_BOX_2"/>
    <property type="match status" value="1"/>
</dbReference>
<name>SOX3_XENTR</name>
<organism>
    <name type="scientific">Xenopus tropicalis</name>
    <name type="common">Western clawed frog</name>
    <name type="synonym">Silurana tropicalis</name>
    <dbReference type="NCBI Taxonomy" id="8364"/>
    <lineage>
        <taxon>Eukaryota</taxon>
        <taxon>Metazoa</taxon>
        <taxon>Chordata</taxon>
        <taxon>Craniata</taxon>
        <taxon>Vertebrata</taxon>
        <taxon>Euteleostomi</taxon>
        <taxon>Amphibia</taxon>
        <taxon>Batrachia</taxon>
        <taxon>Anura</taxon>
        <taxon>Pipoidea</taxon>
        <taxon>Pipidae</taxon>
        <taxon>Xenopodinae</taxon>
        <taxon>Xenopus</taxon>
        <taxon>Silurana</taxon>
    </lineage>
</organism>
<accession>Q68FA4</accession>
<reference evidence="6" key="1">
    <citation type="submission" date="2004-08" db="EMBL/GenBank/DDBJ databases">
        <authorList>
            <consortium name="NIH - Xenopus Gene Collection (XGC) project"/>
        </authorList>
    </citation>
    <scope>NUCLEOTIDE SEQUENCE [LARGE SCALE MRNA]</scope>
    <source>
        <tissue evidence="6">Tail bud</tissue>
    </source>
</reference>
<comment type="function">
    <text evidence="1">Transcription factor with sequence-specific DNA binding activity. Binds to the consensus sequence 5'-[AT][AT]CAA[AT]G-3', showing a preference for 5'-AACAAT-3' and 5'-AACAAAG-3'. Inhibits beta-catenin-mediated dorsal axis specification by binding to sites within the promoter of the beta-catenin-regulated gene nodal5. Maternally derived sox3 acts as a transcriptional repressor of nodal5 and nodal6 to restrict their expression to the vegetal hemisphere of early embryos and thus establish germ layer formation. Acts at multiple points to inhibit nodal signaling, repressing the expression of the other mesoderm-inducing nodal genes nodal, nodal2 and nodal4, and also acting downstream to induce expression of genes including trim33/ectodermin, ema and coco, whose products repress nodal signaling (By similarity).</text>
</comment>
<comment type="subunit">
    <text evidence="3">Interacts with ctnnb1.</text>
</comment>
<comment type="subcellular location">
    <subcellularLocation>
        <location evidence="3 4">Nucleus</location>
    </subcellularLocation>
    <subcellularLocation>
        <location evidence="3">Cytoplasm</location>
    </subcellularLocation>
    <text evidence="3">Primarily cytoplasmic in early embryos. Nuclear localization becomes more pronounced as development proceeds (By similarity).</text>
</comment>
<comment type="domain">
    <text evidence="2">The 9aaTAD motif is a transactivation domain present in a large number of yeast and animal transcription factors.</text>
</comment>
<protein>
    <recommendedName>
        <fullName>Transcription factor Sox-3</fullName>
    </recommendedName>
</protein>
<proteinExistence type="evidence at transcript level"/>
<keyword id="KW-0963">Cytoplasm</keyword>
<keyword id="KW-0217">Developmental protein</keyword>
<keyword id="KW-0238">DNA-binding</keyword>
<keyword id="KW-0306">Gastrulation</keyword>
<keyword id="KW-0539">Nucleus</keyword>
<keyword id="KW-1185">Reference proteome</keyword>
<keyword id="KW-0678">Repressor</keyword>
<keyword id="KW-0804">Transcription</keyword>
<keyword id="KW-0805">Transcription regulation</keyword>
<sequence>MYSMLDTDLKSPVQQSNAPNGGPGTPGGKGNASIPDQERVKRPMNAFMVWSRGQRRKMAQENPKMHNSEISKRLGADWKLLSDSEKRPFIDEAKRLRAVHMKEYPDYKYRPRRKTKTLLKKDKYSLPGNLLAPGVSPVASSVGVGQRIDTYAHMNGWTNGAYSLMQDQLGYSQHPGMNSPQMQQIQHRYDMGGLQYSPMMSSAQTYMNAAASTYSMSPAYNQQSSTVMSLGSMGSVVKSEPSSPPPAITSHTQRACLGDLRDMISMYLPPGGDASDPSSLQSSRLHSVHQHYQSAAGPNGTVPLTHI</sequence>
<gene>
    <name evidence="6" type="primary">sox3</name>
</gene>
<feature type="chain" id="PRO_0000315866" description="Transcription factor Sox-3">
    <location>
        <begin position="1"/>
        <end position="307"/>
    </location>
</feature>
<feature type="DNA-binding region" description="HMG box" evidence="4">
    <location>
        <begin position="40"/>
        <end position="108"/>
    </location>
</feature>
<feature type="region of interest" description="Disordered" evidence="5">
    <location>
        <begin position="1"/>
        <end position="41"/>
    </location>
</feature>
<feature type="short sequence motif" description="9aaTAD" evidence="2">
    <location>
        <begin position="259"/>
        <end position="270"/>
    </location>
</feature>
<feature type="compositionally biased region" description="Gly residues" evidence="5">
    <location>
        <begin position="21"/>
        <end position="30"/>
    </location>
</feature>
<evidence type="ECO:0000250" key="1"/>
<evidence type="ECO:0000250" key="2">
    <source>
        <dbReference type="UniProtKB" id="P41225"/>
    </source>
</evidence>
<evidence type="ECO:0000250" key="3">
    <source>
        <dbReference type="UniProtKB" id="P55863"/>
    </source>
</evidence>
<evidence type="ECO:0000255" key="4">
    <source>
        <dbReference type="PROSITE-ProRule" id="PRU00267"/>
    </source>
</evidence>
<evidence type="ECO:0000256" key="5">
    <source>
        <dbReference type="SAM" id="MobiDB-lite"/>
    </source>
</evidence>
<evidence type="ECO:0000312" key="6">
    <source>
        <dbReference type="EMBL" id="AAH79938.1"/>
    </source>
</evidence>